<gene>
    <name type="primary">CYP84A1</name>
    <name type="synonym">FAH1</name>
    <name type="ordered locus">At4g36220</name>
    <name type="ORF">F23E13.110</name>
</gene>
<comment type="cofactor">
    <cofactor evidence="1">
        <name>heme</name>
        <dbReference type="ChEBI" id="CHEBI:30413"/>
    </cofactor>
</comment>
<comment type="pathway">
    <text>Aromatic compound metabolism; phenylpropanoid biosynthesis.</text>
</comment>
<comment type="subcellular location">
    <subcellularLocation>
        <location evidence="3">Membrane</location>
        <topology evidence="3">Single-pass membrane protein</topology>
    </subcellularLocation>
</comment>
<comment type="similarity">
    <text evidence="3">Belongs to the cytochrome P450 family.</text>
</comment>
<protein>
    <recommendedName>
        <fullName>Cytochrome P450 84A1</fullName>
        <ecNumber>1.14.-.-</ecNumber>
    </recommendedName>
    <alternativeName>
        <fullName>Ferulate-5-hydroxylase</fullName>
        <shortName>F5H</shortName>
    </alternativeName>
</protein>
<name>C84A1_ARATH</name>
<organism>
    <name type="scientific">Arabidopsis thaliana</name>
    <name type="common">Mouse-ear cress</name>
    <dbReference type="NCBI Taxonomy" id="3702"/>
    <lineage>
        <taxon>Eukaryota</taxon>
        <taxon>Viridiplantae</taxon>
        <taxon>Streptophyta</taxon>
        <taxon>Embryophyta</taxon>
        <taxon>Tracheophyta</taxon>
        <taxon>Spermatophyta</taxon>
        <taxon>Magnoliopsida</taxon>
        <taxon>eudicotyledons</taxon>
        <taxon>Gunneridae</taxon>
        <taxon>Pentapetalae</taxon>
        <taxon>rosids</taxon>
        <taxon>malvids</taxon>
        <taxon>Brassicales</taxon>
        <taxon>Brassicaceae</taxon>
        <taxon>Camelineae</taxon>
        <taxon>Arabidopsis</taxon>
    </lineage>
</organism>
<accession>Q42600</accession>
<dbReference type="EC" id="1.14.-.-"/>
<dbReference type="EMBL" id="U38416">
    <property type="protein sequence ID" value="AAC49389.1"/>
    <property type="molecule type" value="mRNA"/>
</dbReference>
<dbReference type="EMBL" id="AF068574">
    <property type="protein sequence ID" value="AAD11580.1"/>
    <property type="molecule type" value="Genomic_DNA"/>
</dbReference>
<dbReference type="EMBL" id="AJ295566">
    <property type="protein sequence ID" value="CAC26922.1"/>
    <property type="molecule type" value="Genomic_DNA"/>
</dbReference>
<dbReference type="EMBL" id="AJ295567">
    <property type="protein sequence ID" value="CAC26923.1"/>
    <property type="molecule type" value="Genomic_DNA"/>
</dbReference>
<dbReference type="EMBL" id="AJ295568">
    <property type="protein sequence ID" value="CAC26924.1"/>
    <property type="molecule type" value="Genomic_DNA"/>
</dbReference>
<dbReference type="EMBL" id="AJ295569">
    <property type="protein sequence ID" value="CAC26925.1"/>
    <property type="molecule type" value="Genomic_DNA"/>
</dbReference>
<dbReference type="EMBL" id="AJ295570">
    <property type="protein sequence ID" value="CAC26926.1"/>
    <property type="molecule type" value="Genomic_DNA"/>
</dbReference>
<dbReference type="EMBL" id="AJ295571">
    <property type="protein sequence ID" value="CAC26927.1"/>
    <property type="molecule type" value="Genomic_DNA"/>
</dbReference>
<dbReference type="EMBL" id="AJ295572">
    <property type="protein sequence ID" value="CAC26928.1"/>
    <property type="molecule type" value="Genomic_DNA"/>
</dbReference>
<dbReference type="EMBL" id="AJ295573">
    <property type="protein sequence ID" value="CAC26929.1"/>
    <property type="molecule type" value="Genomic_DNA"/>
</dbReference>
<dbReference type="EMBL" id="AJ295574">
    <property type="protein sequence ID" value="CAC26930.1"/>
    <property type="molecule type" value="Genomic_DNA"/>
</dbReference>
<dbReference type="EMBL" id="AJ295575">
    <property type="protein sequence ID" value="CAC26931.1"/>
    <property type="molecule type" value="Genomic_DNA"/>
</dbReference>
<dbReference type="EMBL" id="AJ295578">
    <property type="protein sequence ID" value="CAC26934.1"/>
    <property type="molecule type" value="Genomic_DNA"/>
</dbReference>
<dbReference type="EMBL" id="AJ295579">
    <property type="protein sequence ID" value="CAC26935.1"/>
    <property type="molecule type" value="Genomic_DNA"/>
</dbReference>
<dbReference type="EMBL" id="AL022141">
    <property type="protein sequence ID" value="CAA18128.1"/>
    <property type="molecule type" value="Genomic_DNA"/>
</dbReference>
<dbReference type="EMBL" id="AL161589">
    <property type="protein sequence ID" value="CAB80293.1"/>
    <property type="molecule type" value="Genomic_DNA"/>
</dbReference>
<dbReference type="EMBL" id="CP002687">
    <property type="protein sequence ID" value="AEE86636.1"/>
    <property type="molecule type" value="Genomic_DNA"/>
</dbReference>
<dbReference type="PIR" id="T04591">
    <property type="entry name" value="T04591"/>
</dbReference>
<dbReference type="RefSeq" id="NP_195345.1">
    <property type="nucleotide sequence ID" value="NM_119790.3"/>
</dbReference>
<dbReference type="SMR" id="Q42600"/>
<dbReference type="BioGRID" id="15061">
    <property type="interactions" value="2"/>
</dbReference>
<dbReference type="FunCoup" id="Q42600">
    <property type="interactions" value="527"/>
</dbReference>
<dbReference type="IntAct" id="Q42600">
    <property type="interactions" value="1"/>
</dbReference>
<dbReference type="STRING" id="3702.Q42600"/>
<dbReference type="iPTMnet" id="Q42600"/>
<dbReference type="PaxDb" id="3702-AT4G36220.1"/>
<dbReference type="ProteomicsDB" id="240307"/>
<dbReference type="EnsemblPlants" id="AT4G36220.1">
    <property type="protein sequence ID" value="AT4G36220.1"/>
    <property type="gene ID" value="AT4G36220"/>
</dbReference>
<dbReference type="GeneID" id="829779"/>
<dbReference type="Gramene" id="AT4G36220.1">
    <property type="protein sequence ID" value="AT4G36220.1"/>
    <property type="gene ID" value="AT4G36220"/>
</dbReference>
<dbReference type="KEGG" id="ath:AT4G36220"/>
<dbReference type="Araport" id="AT4G36220"/>
<dbReference type="TAIR" id="AT4G36220">
    <property type="gene designation" value="FAH1"/>
</dbReference>
<dbReference type="eggNOG" id="KOG0156">
    <property type="taxonomic scope" value="Eukaryota"/>
</dbReference>
<dbReference type="HOGENOM" id="CLU_001570_4_0_1"/>
<dbReference type="InParanoid" id="Q42600"/>
<dbReference type="OMA" id="RQEMYIG"/>
<dbReference type="OrthoDB" id="2789670at2759"/>
<dbReference type="PhylomeDB" id="Q42600"/>
<dbReference type="BioCyc" id="MetaCyc:AT4G36220-MONOMER"/>
<dbReference type="BRENDA" id="1.14.14.B13">
    <property type="organism ID" value="399"/>
</dbReference>
<dbReference type="UniPathway" id="UPA00711"/>
<dbReference type="PRO" id="PR:Q42600"/>
<dbReference type="Proteomes" id="UP000006548">
    <property type="component" value="Chromosome 4"/>
</dbReference>
<dbReference type="ExpressionAtlas" id="Q42600">
    <property type="expression patterns" value="baseline and differential"/>
</dbReference>
<dbReference type="GO" id="GO:0005783">
    <property type="term" value="C:endoplasmic reticulum"/>
    <property type="evidence" value="ECO:0007005"/>
    <property type="project" value="TAIR"/>
</dbReference>
<dbReference type="GO" id="GO:0005886">
    <property type="term" value="C:plasma membrane"/>
    <property type="evidence" value="ECO:0007005"/>
    <property type="project" value="TAIR"/>
</dbReference>
<dbReference type="GO" id="GO:0020037">
    <property type="term" value="F:heme binding"/>
    <property type="evidence" value="ECO:0007669"/>
    <property type="project" value="InterPro"/>
</dbReference>
<dbReference type="GO" id="GO:0005506">
    <property type="term" value="F:iron ion binding"/>
    <property type="evidence" value="ECO:0007669"/>
    <property type="project" value="InterPro"/>
</dbReference>
<dbReference type="GO" id="GO:0004497">
    <property type="term" value="F:monooxygenase activity"/>
    <property type="evidence" value="ECO:0000314"/>
    <property type="project" value="TAIR"/>
</dbReference>
<dbReference type="GO" id="GO:0016705">
    <property type="term" value="F:oxidoreductase activity, acting on paired donors, with incorporation or reduction of molecular oxygen"/>
    <property type="evidence" value="ECO:0007669"/>
    <property type="project" value="InterPro"/>
</dbReference>
<dbReference type="GO" id="GO:0009809">
    <property type="term" value="P:lignin biosynthetic process"/>
    <property type="evidence" value="ECO:0000315"/>
    <property type="project" value="TAIR"/>
</dbReference>
<dbReference type="GO" id="GO:0009699">
    <property type="term" value="P:phenylpropanoid biosynthetic process"/>
    <property type="evidence" value="ECO:0000304"/>
    <property type="project" value="TAIR"/>
</dbReference>
<dbReference type="GO" id="GO:0010224">
    <property type="term" value="P:response to UV-B"/>
    <property type="evidence" value="ECO:0000315"/>
    <property type="project" value="TAIR"/>
</dbReference>
<dbReference type="CDD" id="cd11072">
    <property type="entry name" value="CYP71-like"/>
    <property type="match status" value="1"/>
</dbReference>
<dbReference type="FunFam" id="1.10.630.10:FF:000054">
    <property type="entry name" value="Cytochrome P450 84A1"/>
    <property type="match status" value="1"/>
</dbReference>
<dbReference type="Gene3D" id="1.10.630.10">
    <property type="entry name" value="Cytochrome P450"/>
    <property type="match status" value="1"/>
</dbReference>
<dbReference type="InterPro" id="IPR053062">
    <property type="entry name" value="CYP450_84A"/>
</dbReference>
<dbReference type="InterPro" id="IPR001128">
    <property type="entry name" value="Cyt_P450"/>
</dbReference>
<dbReference type="InterPro" id="IPR017972">
    <property type="entry name" value="Cyt_P450_CS"/>
</dbReference>
<dbReference type="InterPro" id="IPR002401">
    <property type="entry name" value="Cyt_P450_E_grp-I"/>
</dbReference>
<dbReference type="InterPro" id="IPR036396">
    <property type="entry name" value="Cyt_P450_sf"/>
</dbReference>
<dbReference type="PANTHER" id="PTHR47945">
    <property type="entry name" value="CYTOCHROME P450 84A1-RELATED"/>
    <property type="match status" value="1"/>
</dbReference>
<dbReference type="PANTHER" id="PTHR47945:SF5">
    <property type="entry name" value="CYTOCHROME P450 84A1-RELATED"/>
    <property type="match status" value="1"/>
</dbReference>
<dbReference type="Pfam" id="PF00067">
    <property type="entry name" value="p450"/>
    <property type="match status" value="1"/>
</dbReference>
<dbReference type="PRINTS" id="PR00463">
    <property type="entry name" value="EP450I"/>
</dbReference>
<dbReference type="PRINTS" id="PR00385">
    <property type="entry name" value="P450"/>
</dbReference>
<dbReference type="SUPFAM" id="SSF48264">
    <property type="entry name" value="Cytochrome P450"/>
    <property type="match status" value="1"/>
</dbReference>
<dbReference type="PROSITE" id="PS00086">
    <property type="entry name" value="CYTOCHROME_P450"/>
    <property type="match status" value="1"/>
</dbReference>
<proteinExistence type="evidence at protein level"/>
<reference key="1">
    <citation type="journal article" date="1996" name="Proc. Natl. Acad. Sci. U.S.A.">
        <title>Ferulate-5-hydroxylase from Arabidopsis thaliana defines a new family of cytochrome P450-dependent monooxygenases.</title>
        <authorList>
            <person name="Meyer K."/>
            <person name="Cusumano J.C."/>
            <person name="Somerville C.R."/>
            <person name="Chapple C.C.S."/>
        </authorList>
    </citation>
    <scope>NUCLEOTIDE SEQUENCE [GENOMIC DNA / MRNA]</scope>
    <source>
        <strain>cv. Columbia</strain>
    </source>
</reference>
<reference key="2">
    <citation type="journal article" date="1999" name="Plant Physiol.">
        <title>The regulation of ferulate-5-hydroxylase expression in Arabidopsis in the context of sinapate ester biosynthesis.</title>
        <authorList>
            <person name="Ruegger M."/>
            <person name="Meyer K."/>
            <person name="Cusumano J.C."/>
            <person name="Chapple C."/>
        </authorList>
    </citation>
    <scope>NUCLEOTIDE SEQUENCE [GENOMIC DNA]</scope>
    <source>
        <strain>cv. Landsberg erecta</strain>
    </source>
</reference>
<reference key="3">
    <citation type="journal article" date="2001" name="Mol. Biol. Evol.">
        <title>Nucleotide sequence variation at two genes of the phenylpropanoid pathway, the FAH1 and F3H genes, in Arabidopsis thaliana.</title>
        <authorList>
            <person name="Aguade M."/>
        </authorList>
    </citation>
    <scope>NUCLEOTIDE SEQUENCE [GENOMIC DNA]</scope>
    <source>
        <strain>cv. Can-0</strain>
        <strain>cv. Cha-0</strain>
        <strain>cv. Col-2</strain>
        <strain>cv. Gr-5</strain>
        <strain>cv. La-0</strain>
        <strain>cv. Me-0</strain>
        <strain>cv. Nc-1</strain>
        <strain>cv. Per-1</strain>
        <strain>cv. Rub-1</strain>
        <strain>cv. Tul-0</strain>
        <strain>cv. Yo-0</strain>
    </source>
</reference>
<reference key="4">
    <citation type="journal article" date="1999" name="Nature">
        <title>Sequence and analysis of chromosome 4 of the plant Arabidopsis thaliana.</title>
        <authorList>
            <person name="Mayer K.F.X."/>
            <person name="Schueller C."/>
            <person name="Wambutt R."/>
            <person name="Murphy G."/>
            <person name="Volckaert G."/>
            <person name="Pohl T."/>
            <person name="Duesterhoeft A."/>
            <person name="Stiekema W."/>
            <person name="Entian K.-D."/>
            <person name="Terryn N."/>
            <person name="Harris B."/>
            <person name="Ansorge W."/>
            <person name="Brandt P."/>
            <person name="Grivell L.A."/>
            <person name="Rieger M."/>
            <person name="Weichselgartner M."/>
            <person name="de Simone V."/>
            <person name="Obermaier B."/>
            <person name="Mache R."/>
            <person name="Mueller M."/>
            <person name="Kreis M."/>
            <person name="Delseny M."/>
            <person name="Puigdomenech P."/>
            <person name="Watson M."/>
            <person name="Schmidtheini T."/>
            <person name="Reichert B."/>
            <person name="Portetelle D."/>
            <person name="Perez-Alonso M."/>
            <person name="Boutry M."/>
            <person name="Bancroft I."/>
            <person name="Vos P."/>
            <person name="Hoheisel J."/>
            <person name="Zimmermann W."/>
            <person name="Wedler H."/>
            <person name="Ridley P."/>
            <person name="Langham S.-A."/>
            <person name="McCullagh B."/>
            <person name="Bilham L."/>
            <person name="Robben J."/>
            <person name="van der Schueren J."/>
            <person name="Grymonprez B."/>
            <person name="Chuang Y.-J."/>
            <person name="Vandenbussche F."/>
            <person name="Braeken M."/>
            <person name="Weltjens I."/>
            <person name="Voet M."/>
            <person name="Bastiaens I."/>
            <person name="Aert R."/>
            <person name="Defoor E."/>
            <person name="Weitzenegger T."/>
            <person name="Bothe G."/>
            <person name="Ramsperger U."/>
            <person name="Hilbert H."/>
            <person name="Braun M."/>
            <person name="Holzer E."/>
            <person name="Brandt A."/>
            <person name="Peters S."/>
            <person name="van Staveren M."/>
            <person name="Dirkse W."/>
            <person name="Mooijman P."/>
            <person name="Klein Lankhorst R."/>
            <person name="Rose M."/>
            <person name="Hauf J."/>
            <person name="Koetter P."/>
            <person name="Berneiser S."/>
            <person name="Hempel S."/>
            <person name="Feldpausch M."/>
            <person name="Lamberth S."/>
            <person name="Van den Daele H."/>
            <person name="De Keyser A."/>
            <person name="Buysshaert C."/>
            <person name="Gielen J."/>
            <person name="Villarroel R."/>
            <person name="De Clercq R."/>
            <person name="van Montagu M."/>
            <person name="Rogers J."/>
            <person name="Cronin A."/>
            <person name="Quail M.A."/>
            <person name="Bray-Allen S."/>
            <person name="Clark L."/>
            <person name="Doggett J."/>
            <person name="Hall S."/>
            <person name="Kay M."/>
            <person name="Lennard N."/>
            <person name="McLay K."/>
            <person name="Mayes R."/>
            <person name="Pettett A."/>
            <person name="Rajandream M.A."/>
            <person name="Lyne M."/>
            <person name="Benes V."/>
            <person name="Rechmann S."/>
            <person name="Borkova D."/>
            <person name="Bloecker H."/>
            <person name="Scharfe M."/>
            <person name="Grimm M."/>
            <person name="Loehnert T.-H."/>
            <person name="Dose S."/>
            <person name="de Haan M."/>
            <person name="Maarse A.C."/>
            <person name="Schaefer M."/>
            <person name="Mueller-Auer S."/>
            <person name="Gabel C."/>
            <person name="Fuchs M."/>
            <person name="Fartmann B."/>
            <person name="Granderath K."/>
            <person name="Dauner D."/>
            <person name="Herzl A."/>
            <person name="Neumann S."/>
            <person name="Argiriou A."/>
            <person name="Vitale D."/>
            <person name="Liguori R."/>
            <person name="Piravandi E."/>
            <person name="Massenet O."/>
            <person name="Quigley F."/>
            <person name="Clabauld G."/>
            <person name="Muendlein A."/>
            <person name="Felber R."/>
            <person name="Schnabl S."/>
            <person name="Hiller R."/>
            <person name="Schmidt W."/>
            <person name="Lecharny A."/>
            <person name="Aubourg S."/>
            <person name="Chefdor F."/>
            <person name="Cooke R."/>
            <person name="Berger C."/>
            <person name="Monfort A."/>
            <person name="Casacuberta E."/>
            <person name="Gibbons T."/>
            <person name="Weber N."/>
            <person name="Vandenbol M."/>
            <person name="Bargues M."/>
            <person name="Terol J."/>
            <person name="Torres A."/>
            <person name="Perez-Perez A."/>
            <person name="Purnelle B."/>
            <person name="Bent E."/>
            <person name="Johnson S."/>
            <person name="Tacon D."/>
            <person name="Jesse T."/>
            <person name="Heijnen L."/>
            <person name="Schwarz S."/>
            <person name="Scholler P."/>
            <person name="Heber S."/>
            <person name="Francs P."/>
            <person name="Bielke C."/>
            <person name="Frishman D."/>
            <person name="Haase D."/>
            <person name="Lemcke K."/>
            <person name="Mewes H.-W."/>
            <person name="Stocker S."/>
            <person name="Zaccaria P."/>
            <person name="Bevan M."/>
            <person name="Wilson R.K."/>
            <person name="de la Bastide M."/>
            <person name="Habermann K."/>
            <person name="Parnell L."/>
            <person name="Dedhia N."/>
            <person name="Gnoj L."/>
            <person name="Schutz K."/>
            <person name="Huang E."/>
            <person name="Spiegel L."/>
            <person name="Sekhon M."/>
            <person name="Murray J."/>
            <person name="Sheet P."/>
            <person name="Cordes M."/>
            <person name="Abu-Threideh J."/>
            <person name="Stoneking T."/>
            <person name="Kalicki J."/>
            <person name="Graves T."/>
            <person name="Harmon G."/>
            <person name="Edwards J."/>
            <person name="Latreille P."/>
            <person name="Courtney L."/>
            <person name="Cloud J."/>
            <person name="Abbott A."/>
            <person name="Scott K."/>
            <person name="Johnson D."/>
            <person name="Minx P."/>
            <person name="Bentley D."/>
            <person name="Fulton B."/>
            <person name="Miller N."/>
            <person name="Greco T."/>
            <person name="Kemp K."/>
            <person name="Kramer J."/>
            <person name="Fulton L."/>
            <person name="Mardis E."/>
            <person name="Dante M."/>
            <person name="Pepin K."/>
            <person name="Hillier L.W."/>
            <person name="Nelson J."/>
            <person name="Spieth J."/>
            <person name="Ryan E."/>
            <person name="Andrews S."/>
            <person name="Geisel C."/>
            <person name="Layman D."/>
            <person name="Du H."/>
            <person name="Ali J."/>
            <person name="Berghoff A."/>
            <person name="Jones K."/>
            <person name="Drone K."/>
            <person name="Cotton M."/>
            <person name="Joshu C."/>
            <person name="Antonoiu B."/>
            <person name="Zidanic M."/>
            <person name="Strong C."/>
            <person name="Sun H."/>
            <person name="Lamar B."/>
            <person name="Yordan C."/>
            <person name="Ma P."/>
            <person name="Zhong J."/>
            <person name="Preston R."/>
            <person name="Vil D."/>
            <person name="Shekher M."/>
            <person name="Matero A."/>
            <person name="Shah R."/>
            <person name="Swaby I.K."/>
            <person name="O'Shaughnessy A."/>
            <person name="Rodriguez M."/>
            <person name="Hoffman J."/>
            <person name="Till S."/>
            <person name="Granat S."/>
            <person name="Shohdy N."/>
            <person name="Hasegawa A."/>
            <person name="Hameed A."/>
            <person name="Lodhi M."/>
            <person name="Johnson A."/>
            <person name="Chen E."/>
            <person name="Marra M.A."/>
            <person name="Martienssen R."/>
            <person name="McCombie W.R."/>
        </authorList>
    </citation>
    <scope>NUCLEOTIDE SEQUENCE [LARGE SCALE GENOMIC DNA]</scope>
    <source>
        <strain>cv. Columbia</strain>
    </source>
</reference>
<reference key="5">
    <citation type="journal article" date="2017" name="Plant J.">
        <title>Araport11: a complete reannotation of the Arabidopsis thaliana reference genome.</title>
        <authorList>
            <person name="Cheng C.Y."/>
            <person name="Krishnakumar V."/>
            <person name="Chan A.P."/>
            <person name="Thibaud-Nissen F."/>
            <person name="Schobel S."/>
            <person name="Town C.D."/>
        </authorList>
    </citation>
    <scope>GENOME REANNOTATION</scope>
    <source>
        <strain>cv. Columbia</strain>
    </source>
</reference>
<reference key="6">
    <citation type="journal article" date="2012" name="Mol. Cell. Proteomics">
        <title>Comparative large-scale characterisation of plant vs. mammal proteins reveals similar and idiosyncratic N-alpha acetylation features.</title>
        <authorList>
            <person name="Bienvenut W.V."/>
            <person name="Sumpton D."/>
            <person name="Martinez A."/>
            <person name="Lilla S."/>
            <person name="Espagne C."/>
            <person name="Meinnel T."/>
            <person name="Giglione C."/>
        </authorList>
    </citation>
    <scope>ACETYLATION [LARGE SCALE ANALYSIS] AT MET-1</scope>
    <scope>IDENTIFICATION BY MASS SPECTROMETRY [LARGE SCALE ANALYSIS]</scope>
</reference>
<sequence length="520" mass="58721">MESSISQTLSKLSDPTTSLVIVVSLFIFISFITRRRRPPYPPGPRGWPIIGNMLMMDQLTHRGLANLAKKYGGLCHLRMGFLHMYAVSSPEVARQVLQVQDSVFSNRPATIAISYLTYDRADMAFAHYGPFWRQMRKVCVMKVFSRKRAESWASVRDEVDKMVRSVSCNVGKPINVGEQIFALTRNITYRAAFGSACEKGQDEFIRILQEFSKLFGAFNVADFIPYFGWIDPQGINKRLVKARNDLDGFIDDIIDEHMKKKENQNAVDDGDVVDTDMVDDLLAFYSEEAKLVSETADLQNSIKLTRDNIKAIIMDVMFGGTETVASAIEWALTELLRSPEDLKRVQQELAEVVGLDRRVEESDIEKLTYLKCTLKETLRMHPPIPLLLHETAEDTSIDGFFIPKKSRVMINAFAIGRDPTSWTDPDTFRPSRFLEPGVPDFKGSNFEFIPFGSGRRSCPGMQLGLYALDLAVAHILHCFTWKLPDGMKPSELDMNDVFGLTAPKATRLFAVPTTRLICAL</sequence>
<evidence type="ECO:0000250" key="1"/>
<evidence type="ECO:0000255" key="2"/>
<evidence type="ECO:0000305" key="3"/>
<evidence type="ECO:0007744" key="4">
    <source>
    </source>
</evidence>
<feature type="chain" id="PRO_0000052168" description="Cytochrome P450 84A1">
    <location>
        <begin position="1"/>
        <end position="520"/>
    </location>
</feature>
<feature type="transmembrane region" description="Helical" evidence="2">
    <location>
        <begin position="12"/>
        <end position="32"/>
    </location>
</feature>
<feature type="binding site" description="axial binding residue" evidence="1">
    <location>
        <position position="458"/>
    </location>
    <ligand>
        <name>heme</name>
        <dbReference type="ChEBI" id="CHEBI:30413"/>
    </ligand>
    <ligandPart>
        <name>Fe</name>
        <dbReference type="ChEBI" id="CHEBI:18248"/>
    </ligandPart>
</feature>
<feature type="modified residue" description="N-acetylmethionine" evidence="4">
    <location>
        <position position="1"/>
    </location>
</feature>
<keyword id="KW-0007">Acetylation</keyword>
<keyword id="KW-0349">Heme</keyword>
<keyword id="KW-0408">Iron</keyword>
<keyword id="KW-0472">Membrane</keyword>
<keyword id="KW-0479">Metal-binding</keyword>
<keyword id="KW-0503">Monooxygenase</keyword>
<keyword id="KW-0560">Oxidoreductase</keyword>
<keyword id="KW-1185">Reference proteome</keyword>
<keyword id="KW-0812">Transmembrane</keyword>
<keyword id="KW-1133">Transmembrane helix</keyword>